<comment type="function">
    <text evidence="5 6">Binds actin and actin filament bundles in a Ca(2+)-insensitive manner, but caps the barbed end of actin filaments and is able to sever them in a calcium-dependent manner. Involved in root hair growth through regulating actin organization in a Ca(2+)-dependent manner.</text>
</comment>
<comment type="subcellular location">
    <subcellularLocation>
        <location evidence="5">Cytoplasm</location>
        <location evidence="5">Cytoskeleton</location>
    </subcellularLocation>
</comment>
<comment type="alternative products">
    <event type="alternative splicing"/>
    <isoform>
        <id>O65570-1</id>
        <name>1</name>
        <sequence type="displayed"/>
    </isoform>
    <isoform>
        <id>O65570-2</id>
        <name>2</name>
        <sequence type="described" ref="VSP_056809"/>
    </isoform>
</comment>
<comment type="tissue specificity">
    <text evidence="5 6">Preferentially expressed in vegetative tissues. Detected in the whole seedling, hypocotyl, cotyledon, primary root, roots hair cells and trichomes. Expressed in flowers but not in the silique.</text>
</comment>
<comment type="disruption phenotype">
    <text evidence="5 6">No changes in the primary root length, but shorter root hairs. Increased sensitivity to latrunculin B (LatB) and instability of actin filaments.</text>
</comment>
<comment type="similarity">
    <text evidence="8">Belongs to the villin/gelsolin family.</text>
</comment>
<name>VILI4_ARATH</name>
<gene>
    <name evidence="7" type="primary">VLN4</name>
    <name evidence="9" type="ordered locus">At4g30160</name>
    <name evidence="10" type="ORF">F6G3.190</name>
    <name evidence="11" type="ORF">F9N11.10</name>
</gene>
<evidence type="ECO:0000250" key="1">
    <source>
        <dbReference type="UniProtKB" id="O81645"/>
    </source>
</evidence>
<evidence type="ECO:0000255" key="2"/>
<evidence type="ECO:0000255" key="3">
    <source>
        <dbReference type="PROSITE-ProRule" id="PRU00595"/>
    </source>
</evidence>
<evidence type="ECO:0000256" key="4">
    <source>
        <dbReference type="SAM" id="MobiDB-lite"/>
    </source>
</evidence>
<evidence type="ECO:0000269" key="5">
    <source>
    </source>
</evidence>
<evidence type="ECO:0000269" key="6">
    <source>
    </source>
</evidence>
<evidence type="ECO:0000303" key="7">
    <source>
    </source>
</evidence>
<evidence type="ECO:0000305" key="8"/>
<evidence type="ECO:0000312" key="9">
    <source>
        <dbReference type="Araport" id="AT4G30160"/>
    </source>
</evidence>
<evidence type="ECO:0000312" key="10">
    <source>
        <dbReference type="EMBL" id="CAB43851.1"/>
    </source>
</evidence>
<evidence type="ECO:0000312" key="11">
    <source>
        <dbReference type="EMBL" id="CAB52460.1"/>
    </source>
</evidence>
<evidence type="ECO:0007744" key="12">
    <source>
    </source>
</evidence>
<evidence type="ECO:0007829" key="13">
    <source>
        <dbReference type="PDB" id="5VNT"/>
    </source>
</evidence>
<protein>
    <recommendedName>
        <fullName evidence="7">Villin-4</fullName>
    </recommendedName>
</protein>
<feature type="chain" id="PRO_0000218735" description="Villin-4">
    <location>
        <begin position="1"/>
        <end position="974"/>
    </location>
</feature>
<feature type="repeat" description="Gelsolin-like 1" evidence="2">
    <location>
        <begin position="29"/>
        <end position="79"/>
    </location>
</feature>
<feature type="repeat" description="Gelsolin-like 2" evidence="2">
    <location>
        <begin position="150"/>
        <end position="190"/>
    </location>
</feature>
<feature type="repeat" description="Gelsolin-like 3" evidence="2">
    <location>
        <begin position="262"/>
        <end position="305"/>
    </location>
</feature>
<feature type="repeat" description="Gelsolin-like 4" evidence="2">
    <location>
        <begin position="394"/>
        <end position="451"/>
    </location>
</feature>
<feature type="repeat" description="Gelsolin-like 5" evidence="2">
    <location>
        <begin position="532"/>
        <end position="572"/>
    </location>
</feature>
<feature type="repeat" description="Gelsolin-like 6" evidence="2">
    <location>
        <begin position="634"/>
        <end position="675"/>
    </location>
</feature>
<feature type="domain" description="HP" evidence="3">
    <location>
        <begin position="909"/>
        <end position="974"/>
    </location>
</feature>
<feature type="region of interest" description="Disordered" evidence="4">
    <location>
        <begin position="738"/>
        <end position="783"/>
    </location>
</feature>
<feature type="region of interest" description="Disordered" evidence="4">
    <location>
        <begin position="801"/>
        <end position="833"/>
    </location>
</feature>
<feature type="region of interest" description="Disordered" evidence="4">
    <location>
        <begin position="845"/>
        <end position="930"/>
    </location>
</feature>
<feature type="compositionally biased region" description="Low complexity" evidence="4">
    <location>
        <begin position="824"/>
        <end position="833"/>
    </location>
</feature>
<feature type="compositionally biased region" description="Basic and acidic residues" evidence="4">
    <location>
        <begin position="872"/>
        <end position="887"/>
    </location>
</feature>
<feature type="compositionally biased region" description="Polar residues" evidence="4">
    <location>
        <begin position="888"/>
        <end position="898"/>
    </location>
</feature>
<feature type="compositionally biased region" description="Basic and acidic residues" evidence="4">
    <location>
        <begin position="912"/>
        <end position="921"/>
    </location>
</feature>
<feature type="modified residue" description="Phosphoserine" evidence="12">
    <location>
        <position position="777"/>
    </location>
</feature>
<feature type="modified residue" description="Phosphoserine" evidence="12">
    <location>
        <position position="787"/>
    </location>
</feature>
<feature type="modified residue" description="Phosphoserine" evidence="1">
    <location>
        <position position="890"/>
    </location>
</feature>
<feature type="splice variant" id="VSP_056809" description="In isoform 2." evidence="8">
    <original>K</original>
    <variation>KVRILLKSFF</variation>
    <location>
        <position position="635"/>
    </location>
</feature>
<feature type="turn" evidence="13">
    <location>
        <begin position="917"/>
        <end position="919"/>
    </location>
</feature>
<feature type="helix" evidence="13">
    <location>
        <begin position="933"/>
        <end position="939"/>
    </location>
</feature>
<feature type="helix" evidence="13">
    <location>
        <begin position="942"/>
        <end position="949"/>
    </location>
</feature>
<feature type="helix" evidence="13">
    <location>
        <begin position="953"/>
        <end position="958"/>
    </location>
</feature>
<feature type="helix" evidence="13">
    <location>
        <begin position="961"/>
        <end position="970"/>
    </location>
</feature>
<dbReference type="EMBL" id="Y12782">
    <property type="protein sequence ID" value="CAA73320.1"/>
    <property type="molecule type" value="mRNA"/>
</dbReference>
<dbReference type="EMBL" id="AL078464">
    <property type="protein sequence ID" value="CAB43851.1"/>
    <property type="molecule type" value="Genomic_DNA"/>
</dbReference>
<dbReference type="EMBL" id="AL109796">
    <property type="protein sequence ID" value="CAB52460.1"/>
    <property type="molecule type" value="Genomic_DNA"/>
</dbReference>
<dbReference type="EMBL" id="AL161576">
    <property type="protein sequence ID" value="CAB81009.1"/>
    <property type="molecule type" value="Genomic_DNA"/>
</dbReference>
<dbReference type="EMBL" id="CP002687">
    <property type="protein sequence ID" value="AEE85727.1"/>
    <property type="molecule type" value="Genomic_DNA"/>
</dbReference>
<dbReference type="EMBL" id="CP002687">
    <property type="protein sequence ID" value="AEE85728.1"/>
    <property type="molecule type" value="Genomic_DNA"/>
</dbReference>
<dbReference type="EMBL" id="CP002687">
    <property type="protein sequence ID" value="ANM68140.1"/>
    <property type="molecule type" value="Genomic_DNA"/>
</dbReference>
<dbReference type="EMBL" id="CP002687">
    <property type="protein sequence ID" value="ANM68141.1"/>
    <property type="molecule type" value="Genomic_DNA"/>
</dbReference>
<dbReference type="EMBL" id="AK117296">
    <property type="protein sequence ID" value="BAC41968.1"/>
    <property type="molecule type" value="mRNA"/>
</dbReference>
<dbReference type="EMBL" id="BT005980">
    <property type="protein sequence ID" value="AAO64915.1"/>
    <property type="molecule type" value="mRNA"/>
</dbReference>
<dbReference type="PIR" id="T14076">
    <property type="entry name" value="T14076"/>
</dbReference>
<dbReference type="RefSeq" id="NP_001190869.1">
    <molecule id="O65570-2"/>
    <property type="nucleotide sequence ID" value="NM_001203940.1"/>
</dbReference>
<dbReference type="RefSeq" id="NP_001329917.1">
    <molecule id="O65570-1"/>
    <property type="nucleotide sequence ID" value="NM_001342000.1"/>
</dbReference>
<dbReference type="RefSeq" id="NP_001329918.1">
    <molecule id="O65570-1"/>
    <property type="nucleotide sequence ID" value="NM_001341999.1"/>
</dbReference>
<dbReference type="RefSeq" id="NP_194745.1">
    <molecule id="O65570-1"/>
    <property type="nucleotide sequence ID" value="NM_119162.5"/>
</dbReference>
<dbReference type="PDB" id="5VNT">
    <property type="method" value="NMR"/>
    <property type="chains" value="A=912-974"/>
</dbReference>
<dbReference type="PDBsum" id="5VNT"/>
<dbReference type="SMR" id="O65570"/>
<dbReference type="BioGRID" id="14426">
    <property type="interactions" value="1"/>
</dbReference>
<dbReference type="FunCoup" id="O65570">
    <property type="interactions" value="1542"/>
</dbReference>
<dbReference type="STRING" id="3702.O65570"/>
<dbReference type="iPTMnet" id="O65570"/>
<dbReference type="PaxDb" id="3702-AT4G30160.2"/>
<dbReference type="ProteomicsDB" id="242699">
    <molecule id="O65570-1"/>
</dbReference>
<dbReference type="EnsemblPlants" id="AT4G30160.1">
    <molecule id="O65570-1"/>
    <property type="protein sequence ID" value="AT4G30160.1"/>
    <property type="gene ID" value="AT4G30160"/>
</dbReference>
<dbReference type="EnsemblPlants" id="AT4G30160.2">
    <molecule id="O65570-2"/>
    <property type="protein sequence ID" value="AT4G30160.2"/>
    <property type="gene ID" value="AT4G30160"/>
</dbReference>
<dbReference type="EnsemblPlants" id="AT4G30160.3">
    <molecule id="O65570-1"/>
    <property type="protein sequence ID" value="AT4G30160.3"/>
    <property type="gene ID" value="AT4G30160"/>
</dbReference>
<dbReference type="EnsemblPlants" id="AT4G30160.4">
    <molecule id="O65570-1"/>
    <property type="protein sequence ID" value="AT4G30160.4"/>
    <property type="gene ID" value="AT4G30160"/>
</dbReference>
<dbReference type="GeneID" id="829139"/>
<dbReference type="Gramene" id="AT4G30160.1">
    <molecule id="O65570-1"/>
    <property type="protein sequence ID" value="AT4G30160.1"/>
    <property type="gene ID" value="AT4G30160"/>
</dbReference>
<dbReference type="Gramene" id="AT4G30160.2">
    <molecule id="O65570-2"/>
    <property type="protein sequence ID" value="AT4G30160.2"/>
    <property type="gene ID" value="AT4G30160"/>
</dbReference>
<dbReference type="Gramene" id="AT4G30160.3">
    <molecule id="O65570-1"/>
    <property type="protein sequence ID" value="AT4G30160.3"/>
    <property type="gene ID" value="AT4G30160"/>
</dbReference>
<dbReference type="Gramene" id="AT4G30160.4">
    <molecule id="O65570-1"/>
    <property type="protein sequence ID" value="AT4G30160.4"/>
    <property type="gene ID" value="AT4G30160"/>
</dbReference>
<dbReference type="KEGG" id="ath:AT4G30160"/>
<dbReference type="Araport" id="AT4G30160"/>
<dbReference type="TAIR" id="AT4G30160">
    <property type="gene designation" value="VLN4"/>
</dbReference>
<dbReference type="eggNOG" id="KOG0443">
    <property type="taxonomic scope" value="Eukaryota"/>
</dbReference>
<dbReference type="HOGENOM" id="CLU_002568_2_1_1"/>
<dbReference type="InParanoid" id="O65570"/>
<dbReference type="OMA" id="EPASFWV"/>
<dbReference type="OrthoDB" id="6375767at2759"/>
<dbReference type="PhylomeDB" id="O65570"/>
<dbReference type="PRO" id="PR:O65570"/>
<dbReference type="Proteomes" id="UP000006548">
    <property type="component" value="Chromosome 4"/>
</dbReference>
<dbReference type="ExpressionAtlas" id="O65570">
    <property type="expression patterns" value="baseline and differential"/>
</dbReference>
<dbReference type="GO" id="GO:0005737">
    <property type="term" value="C:cytoplasm"/>
    <property type="evidence" value="ECO:0007669"/>
    <property type="project" value="UniProtKB-KW"/>
</dbReference>
<dbReference type="GO" id="GO:0005856">
    <property type="term" value="C:cytoskeleton"/>
    <property type="evidence" value="ECO:0007669"/>
    <property type="project" value="UniProtKB-SubCell"/>
</dbReference>
<dbReference type="GO" id="GO:0005886">
    <property type="term" value="C:plasma membrane"/>
    <property type="evidence" value="ECO:0007005"/>
    <property type="project" value="TAIR"/>
</dbReference>
<dbReference type="GO" id="GO:0051015">
    <property type="term" value="F:actin filament binding"/>
    <property type="evidence" value="ECO:0000314"/>
    <property type="project" value="TAIR"/>
</dbReference>
<dbReference type="GO" id="GO:0003729">
    <property type="term" value="F:mRNA binding"/>
    <property type="evidence" value="ECO:0000314"/>
    <property type="project" value="TAIR"/>
</dbReference>
<dbReference type="GO" id="GO:0051764">
    <property type="term" value="P:actin crosslink formation"/>
    <property type="evidence" value="ECO:0000314"/>
    <property type="project" value="TAIR"/>
</dbReference>
<dbReference type="GO" id="GO:0051693">
    <property type="term" value="P:actin filament capping"/>
    <property type="evidence" value="ECO:0007669"/>
    <property type="project" value="UniProtKB-KW"/>
</dbReference>
<dbReference type="GO" id="GO:0030042">
    <property type="term" value="P:actin filament depolymerization"/>
    <property type="evidence" value="ECO:0000314"/>
    <property type="project" value="TAIR"/>
</dbReference>
<dbReference type="GO" id="GO:0007015">
    <property type="term" value="P:actin filament organization"/>
    <property type="evidence" value="ECO:0000315"/>
    <property type="project" value="TAIR"/>
</dbReference>
<dbReference type="GO" id="GO:0051014">
    <property type="term" value="P:actin filament severing"/>
    <property type="evidence" value="ECO:0000314"/>
    <property type="project" value="TAIR"/>
</dbReference>
<dbReference type="GO" id="GO:0099636">
    <property type="term" value="P:cytoplasmic streaming"/>
    <property type="evidence" value="ECO:0000315"/>
    <property type="project" value="TAIR"/>
</dbReference>
<dbReference type="GO" id="GO:0048767">
    <property type="term" value="P:root hair elongation"/>
    <property type="evidence" value="ECO:0000315"/>
    <property type="project" value="TAIR"/>
</dbReference>
<dbReference type="CDD" id="cd11290">
    <property type="entry name" value="gelsolin_S1_like"/>
    <property type="match status" value="1"/>
</dbReference>
<dbReference type="CDD" id="cd11289">
    <property type="entry name" value="gelsolin_S2_like"/>
    <property type="match status" value="1"/>
</dbReference>
<dbReference type="CDD" id="cd11292">
    <property type="entry name" value="gelsolin_S3_like"/>
    <property type="match status" value="1"/>
</dbReference>
<dbReference type="CDD" id="cd11293">
    <property type="entry name" value="gelsolin_S4_like"/>
    <property type="match status" value="1"/>
</dbReference>
<dbReference type="CDD" id="cd11288">
    <property type="entry name" value="gelsolin_S5_like"/>
    <property type="match status" value="1"/>
</dbReference>
<dbReference type="CDD" id="cd11291">
    <property type="entry name" value="gelsolin_S6_like"/>
    <property type="match status" value="1"/>
</dbReference>
<dbReference type="FunFam" id="3.40.20.10:FF:000001">
    <property type="entry name" value="Gelsolin"/>
    <property type="match status" value="1"/>
</dbReference>
<dbReference type="FunFam" id="3.40.20.10:FF:000002">
    <property type="entry name" value="Gelsolin"/>
    <property type="match status" value="1"/>
</dbReference>
<dbReference type="FunFam" id="3.40.20.10:FF:000033">
    <property type="entry name" value="Villin-4"/>
    <property type="match status" value="1"/>
</dbReference>
<dbReference type="FunFam" id="3.40.20.10:FF:000039">
    <property type="entry name" value="Villin-4"/>
    <property type="match status" value="1"/>
</dbReference>
<dbReference type="FunFam" id="1.10.950.10:FF:000004">
    <property type="entry name" value="Villin-like 1"/>
    <property type="match status" value="1"/>
</dbReference>
<dbReference type="FunFam" id="3.40.20.10:FF:000028">
    <property type="entry name" value="Villin-like 1"/>
    <property type="match status" value="1"/>
</dbReference>
<dbReference type="FunFam" id="3.40.20.10:FF:000038">
    <property type="entry name" value="Villin-like 1"/>
    <property type="match status" value="1"/>
</dbReference>
<dbReference type="Gene3D" id="3.40.20.10">
    <property type="entry name" value="Severin"/>
    <property type="match status" value="6"/>
</dbReference>
<dbReference type="Gene3D" id="1.10.950.10">
    <property type="entry name" value="Villin headpiece domain"/>
    <property type="match status" value="1"/>
</dbReference>
<dbReference type="InterPro" id="IPR029006">
    <property type="entry name" value="ADF-H/Gelsolin-like_dom_sf"/>
</dbReference>
<dbReference type="InterPro" id="IPR007123">
    <property type="entry name" value="Gelsolin-like_dom"/>
</dbReference>
<dbReference type="InterPro" id="IPR007122">
    <property type="entry name" value="Villin/Gelsolin"/>
</dbReference>
<dbReference type="InterPro" id="IPR003128">
    <property type="entry name" value="Villin_headpiece"/>
</dbReference>
<dbReference type="InterPro" id="IPR036886">
    <property type="entry name" value="Villin_headpiece_dom_sf"/>
</dbReference>
<dbReference type="PANTHER" id="PTHR11977">
    <property type="entry name" value="VILLIN"/>
    <property type="match status" value="1"/>
</dbReference>
<dbReference type="PANTHER" id="PTHR11977:SF138">
    <property type="entry name" value="VILLIN-4"/>
    <property type="match status" value="1"/>
</dbReference>
<dbReference type="Pfam" id="PF00626">
    <property type="entry name" value="Gelsolin"/>
    <property type="match status" value="4"/>
</dbReference>
<dbReference type="Pfam" id="PF02209">
    <property type="entry name" value="VHP"/>
    <property type="match status" value="1"/>
</dbReference>
<dbReference type="PRINTS" id="PR00597">
    <property type="entry name" value="GELSOLIN"/>
</dbReference>
<dbReference type="SMART" id="SM00262">
    <property type="entry name" value="GEL"/>
    <property type="match status" value="6"/>
</dbReference>
<dbReference type="SMART" id="SM00153">
    <property type="entry name" value="VHP"/>
    <property type="match status" value="1"/>
</dbReference>
<dbReference type="SUPFAM" id="SSF55753">
    <property type="entry name" value="Actin depolymerizing proteins"/>
    <property type="match status" value="6"/>
</dbReference>
<dbReference type="SUPFAM" id="SSF47050">
    <property type="entry name" value="VHP, Villin headpiece domain"/>
    <property type="match status" value="1"/>
</dbReference>
<dbReference type="PROSITE" id="PS51089">
    <property type="entry name" value="HP"/>
    <property type="match status" value="1"/>
</dbReference>
<keyword id="KW-0002">3D-structure</keyword>
<keyword id="KW-0117">Actin capping</keyword>
<keyword id="KW-0009">Actin-binding</keyword>
<keyword id="KW-0025">Alternative splicing</keyword>
<keyword id="KW-0106">Calcium</keyword>
<keyword id="KW-0963">Cytoplasm</keyword>
<keyword id="KW-0206">Cytoskeleton</keyword>
<keyword id="KW-0597">Phosphoprotein</keyword>
<keyword id="KW-1185">Reference proteome</keyword>
<keyword id="KW-0677">Repeat</keyword>
<proteinExistence type="evidence at protein level"/>
<sequence>MSVSMRDLDPAFQGAGQKAGIEIWRIENFIPTPIPKSSIGKFFTGDSYIVLKTTALKTGALRHDIHYWLGKDTSQDEAGTAAVKTVELDAALGGRAVQYREVQGHETEKFLSYFKPCIIPQEGGVASGFKHVVAEEHITRLFVCRGKHVVHVKEVPFARSSLNHDDIYILDTKSKIFQFNGSNSSIQERAKALEVVQYIKDTYHDGTCEVATVEDGKLMADADSGEFWGFFGGFAPLPRKTANDEDKTYNSDITRLFCVEKGQANPVEGDTLKREMLDTNKCYILDCGIEVFVWMGRTTSLDDRKIASKAAEEMIRSSERPKSQMIRIIEGFETVPFRSKFESWTQETNTTVSEDGRGRVAALLQRQGVNVRGLMKAAPPKEEPQVFIDCTGNLQVWRVNGQAKTLLQAADHSKFYSGDCYVFQYSYPGEEKEEVLIGTWFGKQSVEEERGSAVSMASKMVESMKFVPAQARIYEGKEPIQFFVIMQSFIVFKGGISSGYKKYIAEKEVDDDTYNENGVALFRIQGSGPENMQAIQVDPVAASLNSSYYYILHNDSSVFTWAGNLSTATDQELAERQLDLIKPNQQSRAQKEGSESEQFWELLGGKAEYSSQKLTKEPERDPHLFSCTFTKEVLKVTEIYNFTQDDLMTEDIFIIDCHSEIFVWVGQEVVPKNKLLALTIGEKFIEKDSLLEKLSPEAPIYVIMEGGEPSFFTRFFTSWDSSKSAMHGNSFQRKLKIVKNGGTPVADKPKRRTPASYGGRASVPDKSQQRSRSMSFSPDRVRVRGRSPAFNALAATFESQNARNLSTPPPVVRKLYPRSVTPDSSKFAPAPKSSAIASRSALFEKIPPQEPSIPKPVKASPKTPESPAPESNSKEQEEKKENDKEEGSMSSRIESLTIQEDAKEGVEDEEDLPAHPYDRLKTTSTDPVSDIDVTRREAYLSSEEFKEKFGMTKEAFYKLPKWKQNKFKMAVQLF</sequence>
<reference key="1">
    <citation type="submission" date="1997-04" db="EMBL/GenBank/DDBJ databases">
        <authorList>
            <person name="Klein M.V."/>
        </authorList>
    </citation>
    <scope>NUCLEOTIDE SEQUENCE [MRNA] (ISOFORM 1)</scope>
    <source>
        <strain>cv. Columbia</strain>
        <tissue>Seedling hypocotyl</tissue>
    </source>
</reference>
<reference key="2">
    <citation type="journal article" date="1999" name="Nature">
        <title>Sequence and analysis of chromosome 4 of the plant Arabidopsis thaliana.</title>
        <authorList>
            <person name="Mayer K.F.X."/>
            <person name="Schueller C."/>
            <person name="Wambutt R."/>
            <person name="Murphy G."/>
            <person name="Volckaert G."/>
            <person name="Pohl T."/>
            <person name="Duesterhoeft A."/>
            <person name="Stiekema W."/>
            <person name="Entian K.-D."/>
            <person name="Terryn N."/>
            <person name="Harris B."/>
            <person name="Ansorge W."/>
            <person name="Brandt P."/>
            <person name="Grivell L.A."/>
            <person name="Rieger M."/>
            <person name="Weichselgartner M."/>
            <person name="de Simone V."/>
            <person name="Obermaier B."/>
            <person name="Mache R."/>
            <person name="Mueller M."/>
            <person name="Kreis M."/>
            <person name="Delseny M."/>
            <person name="Puigdomenech P."/>
            <person name="Watson M."/>
            <person name="Schmidtheini T."/>
            <person name="Reichert B."/>
            <person name="Portetelle D."/>
            <person name="Perez-Alonso M."/>
            <person name="Boutry M."/>
            <person name="Bancroft I."/>
            <person name="Vos P."/>
            <person name="Hoheisel J."/>
            <person name="Zimmermann W."/>
            <person name="Wedler H."/>
            <person name="Ridley P."/>
            <person name="Langham S.-A."/>
            <person name="McCullagh B."/>
            <person name="Bilham L."/>
            <person name="Robben J."/>
            <person name="van der Schueren J."/>
            <person name="Grymonprez B."/>
            <person name="Chuang Y.-J."/>
            <person name="Vandenbussche F."/>
            <person name="Braeken M."/>
            <person name="Weltjens I."/>
            <person name="Voet M."/>
            <person name="Bastiaens I."/>
            <person name="Aert R."/>
            <person name="Defoor E."/>
            <person name="Weitzenegger T."/>
            <person name="Bothe G."/>
            <person name="Ramsperger U."/>
            <person name="Hilbert H."/>
            <person name="Braun M."/>
            <person name="Holzer E."/>
            <person name="Brandt A."/>
            <person name="Peters S."/>
            <person name="van Staveren M."/>
            <person name="Dirkse W."/>
            <person name="Mooijman P."/>
            <person name="Klein Lankhorst R."/>
            <person name="Rose M."/>
            <person name="Hauf J."/>
            <person name="Koetter P."/>
            <person name="Berneiser S."/>
            <person name="Hempel S."/>
            <person name="Feldpausch M."/>
            <person name="Lamberth S."/>
            <person name="Van den Daele H."/>
            <person name="De Keyser A."/>
            <person name="Buysshaert C."/>
            <person name="Gielen J."/>
            <person name="Villarroel R."/>
            <person name="De Clercq R."/>
            <person name="van Montagu M."/>
            <person name="Rogers J."/>
            <person name="Cronin A."/>
            <person name="Quail M.A."/>
            <person name="Bray-Allen S."/>
            <person name="Clark L."/>
            <person name="Doggett J."/>
            <person name="Hall S."/>
            <person name="Kay M."/>
            <person name="Lennard N."/>
            <person name="McLay K."/>
            <person name="Mayes R."/>
            <person name="Pettett A."/>
            <person name="Rajandream M.A."/>
            <person name="Lyne M."/>
            <person name="Benes V."/>
            <person name="Rechmann S."/>
            <person name="Borkova D."/>
            <person name="Bloecker H."/>
            <person name="Scharfe M."/>
            <person name="Grimm M."/>
            <person name="Loehnert T.-H."/>
            <person name="Dose S."/>
            <person name="de Haan M."/>
            <person name="Maarse A.C."/>
            <person name="Schaefer M."/>
            <person name="Mueller-Auer S."/>
            <person name="Gabel C."/>
            <person name="Fuchs M."/>
            <person name="Fartmann B."/>
            <person name="Granderath K."/>
            <person name="Dauner D."/>
            <person name="Herzl A."/>
            <person name="Neumann S."/>
            <person name="Argiriou A."/>
            <person name="Vitale D."/>
            <person name="Liguori R."/>
            <person name="Piravandi E."/>
            <person name="Massenet O."/>
            <person name="Quigley F."/>
            <person name="Clabauld G."/>
            <person name="Muendlein A."/>
            <person name="Felber R."/>
            <person name="Schnabl S."/>
            <person name="Hiller R."/>
            <person name="Schmidt W."/>
            <person name="Lecharny A."/>
            <person name="Aubourg S."/>
            <person name="Chefdor F."/>
            <person name="Cooke R."/>
            <person name="Berger C."/>
            <person name="Monfort A."/>
            <person name="Casacuberta E."/>
            <person name="Gibbons T."/>
            <person name="Weber N."/>
            <person name="Vandenbol M."/>
            <person name="Bargues M."/>
            <person name="Terol J."/>
            <person name="Torres A."/>
            <person name="Perez-Perez A."/>
            <person name="Purnelle B."/>
            <person name="Bent E."/>
            <person name="Johnson S."/>
            <person name="Tacon D."/>
            <person name="Jesse T."/>
            <person name="Heijnen L."/>
            <person name="Schwarz S."/>
            <person name="Scholler P."/>
            <person name="Heber S."/>
            <person name="Francs P."/>
            <person name="Bielke C."/>
            <person name="Frishman D."/>
            <person name="Haase D."/>
            <person name="Lemcke K."/>
            <person name="Mewes H.-W."/>
            <person name="Stocker S."/>
            <person name="Zaccaria P."/>
            <person name="Bevan M."/>
            <person name="Wilson R.K."/>
            <person name="de la Bastide M."/>
            <person name="Habermann K."/>
            <person name="Parnell L."/>
            <person name="Dedhia N."/>
            <person name="Gnoj L."/>
            <person name="Schutz K."/>
            <person name="Huang E."/>
            <person name="Spiegel L."/>
            <person name="Sekhon M."/>
            <person name="Murray J."/>
            <person name="Sheet P."/>
            <person name="Cordes M."/>
            <person name="Abu-Threideh J."/>
            <person name="Stoneking T."/>
            <person name="Kalicki J."/>
            <person name="Graves T."/>
            <person name="Harmon G."/>
            <person name="Edwards J."/>
            <person name="Latreille P."/>
            <person name="Courtney L."/>
            <person name="Cloud J."/>
            <person name="Abbott A."/>
            <person name="Scott K."/>
            <person name="Johnson D."/>
            <person name="Minx P."/>
            <person name="Bentley D."/>
            <person name="Fulton B."/>
            <person name="Miller N."/>
            <person name="Greco T."/>
            <person name="Kemp K."/>
            <person name="Kramer J."/>
            <person name="Fulton L."/>
            <person name="Mardis E."/>
            <person name="Dante M."/>
            <person name="Pepin K."/>
            <person name="Hillier L.W."/>
            <person name="Nelson J."/>
            <person name="Spieth J."/>
            <person name="Ryan E."/>
            <person name="Andrews S."/>
            <person name="Geisel C."/>
            <person name="Layman D."/>
            <person name="Du H."/>
            <person name="Ali J."/>
            <person name="Berghoff A."/>
            <person name="Jones K."/>
            <person name="Drone K."/>
            <person name="Cotton M."/>
            <person name="Joshu C."/>
            <person name="Antonoiu B."/>
            <person name="Zidanic M."/>
            <person name="Strong C."/>
            <person name="Sun H."/>
            <person name="Lamar B."/>
            <person name="Yordan C."/>
            <person name="Ma P."/>
            <person name="Zhong J."/>
            <person name="Preston R."/>
            <person name="Vil D."/>
            <person name="Shekher M."/>
            <person name="Matero A."/>
            <person name="Shah R."/>
            <person name="Swaby I.K."/>
            <person name="O'Shaughnessy A."/>
            <person name="Rodriguez M."/>
            <person name="Hoffman J."/>
            <person name="Till S."/>
            <person name="Granat S."/>
            <person name="Shohdy N."/>
            <person name="Hasegawa A."/>
            <person name="Hameed A."/>
            <person name="Lodhi M."/>
            <person name="Johnson A."/>
            <person name="Chen E."/>
            <person name="Marra M.A."/>
            <person name="Martienssen R."/>
            <person name="McCombie W.R."/>
        </authorList>
    </citation>
    <scope>NUCLEOTIDE SEQUENCE [LARGE SCALE GENOMIC DNA]</scope>
    <source>
        <strain>cv. Columbia</strain>
    </source>
</reference>
<reference key="3">
    <citation type="journal article" date="2017" name="Plant J.">
        <title>Araport11: a complete reannotation of the Arabidopsis thaliana reference genome.</title>
        <authorList>
            <person name="Cheng C.Y."/>
            <person name="Krishnakumar V."/>
            <person name="Chan A.P."/>
            <person name="Thibaud-Nissen F."/>
            <person name="Schobel S."/>
            <person name="Town C.D."/>
        </authorList>
    </citation>
    <scope>GENOME REANNOTATION</scope>
    <source>
        <strain>cv. Columbia</strain>
    </source>
</reference>
<reference key="4">
    <citation type="journal article" date="2002" name="Science">
        <title>Functional annotation of a full-length Arabidopsis cDNA collection.</title>
        <authorList>
            <person name="Seki M."/>
            <person name="Narusaka M."/>
            <person name="Kamiya A."/>
            <person name="Ishida J."/>
            <person name="Satou M."/>
            <person name="Sakurai T."/>
            <person name="Nakajima M."/>
            <person name="Enju A."/>
            <person name="Akiyama K."/>
            <person name="Oono Y."/>
            <person name="Muramatsu M."/>
            <person name="Hayashizaki Y."/>
            <person name="Kawai J."/>
            <person name="Carninci P."/>
            <person name="Itoh M."/>
            <person name="Ishii Y."/>
            <person name="Arakawa T."/>
            <person name="Shibata K."/>
            <person name="Shinagawa A."/>
            <person name="Shinozaki K."/>
        </authorList>
    </citation>
    <scope>NUCLEOTIDE SEQUENCE [LARGE SCALE MRNA] (ISOFORM 1)</scope>
    <source>
        <strain>cv. Columbia</strain>
    </source>
</reference>
<reference key="5">
    <citation type="journal article" date="2003" name="Science">
        <title>Empirical analysis of transcriptional activity in the Arabidopsis genome.</title>
        <authorList>
            <person name="Yamada K."/>
            <person name="Lim J."/>
            <person name="Dale J.M."/>
            <person name="Chen H."/>
            <person name="Shinn P."/>
            <person name="Palm C.J."/>
            <person name="Southwick A.M."/>
            <person name="Wu H.C."/>
            <person name="Kim C.J."/>
            <person name="Nguyen M."/>
            <person name="Pham P.K."/>
            <person name="Cheuk R.F."/>
            <person name="Karlin-Newmann G."/>
            <person name="Liu S.X."/>
            <person name="Lam B."/>
            <person name="Sakano H."/>
            <person name="Wu T."/>
            <person name="Yu G."/>
            <person name="Miranda M."/>
            <person name="Quach H.L."/>
            <person name="Tripp M."/>
            <person name="Chang C.H."/>
            <person name="Lee J.M."/>
            <person name="Toriumi M.J."/>
            <person name="Chan M.M."/>
            <person name="Tang C.C."/>
            <person name="Onodera C.S."/>
            <person name="Deng J.M."/>
            <person name="Akiyama K."/>
            <person name="Ansari Y."/>
            <person name="Arakawa T."/>
            <person name="Banh J."/>
            <person name="Banno F."/>
            <person name="Bowser L."/>
            <person name="Brooks S.Y."/>
            <person name="Carninci P."/>
            <person name="Chao Q."/>
            <person name="Choy N."/>
            <person name="Enju A."/>
            <person name="Goldsmith A.D."/>
            <person name="Gurjal M."/>
            <person name="Hansen N.F."/>
            <person name="Hayashizaki Y."/>
            <person name="Johnson-Hopson C."/>
            <person name="Hsuan V.W."/>
            <person name="Iida K."/>
            <person name="Karnes M."/>
            <person name="Khan S."/>
            <person name="Koesema E."/>
            <person name="Ishida J."/>
            <person name="Jiang P.X."/>
            <person name="Jones T."/>
            <person name="Kawai J."/>
            <person name="Kamiya A."/>
            <person name="Meyers C."/>
            <person name="Nakajima M."/>
            <person name="Narusaka M."/>
            <person name="Seki M."/>
            <person name="Sakurai T."/>
            <person name="Satou M."/>
            <person name="Tamse R."/>
            <person name="Vaysberg M."/>
            <person name="Wallender E.K."/>
            <person name="Wong C."/>
            <person name="Yamamura Y."/>
            <person name="Yuan S."/>
            <person name="Shinozaki K."/>
            <person name="Davis R.W."/>
            <person name="Theologis A."/>
            <person name="Ecker J.R."/>
        </authorList>
    </citation>
    <scope>NUCLEOTIDE SEQUENCE [LARGE SCALE MRNA] (ISOFORM 1)</scope>
    <source>
        <strain>cv. Columbia</strain>
    </source>
</reference>
<reference key="6">
    <citation type="journal article" date="2000" name="Plant Physiol.">
        <title>Villin-like actin-binding proteins are expressed ubiquitously in Arabidopsis.</title>
        <authorList>
            <person name="Klahre U."/>
            <person name="Friederich E."/>
            <person name="Kost B."/>
            <person name="Louvard D."/>
            <person name="Chua N.-H."/>
        </authorList>
    </citation>
    <scope>GENE FAMILY</scope>
    <scope>NOMENCLATURE</scope>
</reference>
<reference key="7">
    <citation type="journal article" date="2009" name="Plant Physiol.">
        <title>Large-scale Arabidopsis phosphoproteome profiling reveals novel chloroplast kinase substrates and phosphorylation networks.</title>
        <authorList>
            <person name="Reiland S."/>
            <person name="Messerli G."/>
            <person name="Baerenfaller K."/>
            <person name="Gerrits B."/>
            <person name="Endler A."/>
            <person name="Grossmann J."/>
            <person name="Gruissem W."/>
            <person name="Baginsky S."/>
        </authorList>
    </citation>
    <scope>PHOSPHORYLATION [LARGE SCALE ANALYSIS] AT SER-777 AND SER-787</scope>
    <scope>IDENTIFICATION BY MASS SPECTROMETRY [LARGE SCALE ANALYSIS]</scope>
</reference>
<reference key="8">
    <citation type="journal article" date="2011" name="New Phytol.">
        <title>Arabidopsis VILLIN4 is involved in root hair growth through regulating actin organization in a Ca2+-dependent manner.</title>
        <authorList>
            <person name="Zhang Y."/>
            <person name="Xiao Y."/>
            <person name="Du F."/>
            <person name="Cao L."/>
            <person name="Dong H."/>
            <person name="Ren H."/>
        </authorList>
    </citation>
    <scope>FUNCTION</scope>
    <scope>TISSUE SPECIFICITY</scope>
    <scope>SUBCELLULAR LOCATION</scope>
    <scope>DISRUPTION PHENOTYPE</scope>
    <source>
        <strain>cv. Columbia</strain>
    </source>
</reference>
<reference key="9">
    <citation type="journal article" date="2011" name="Plant Signal. Behav.">
        <title>The universal bundling activity of AtVLN4 in diffusely growing cells.</title>
        <authorList>
            <person name="Du F."/>
            <person name="Zhang Y."/>
            <person name="Ren H."/>
        </authorList>
    </citation>
    <scope>FUNCTION</scope>
    <scope>TISSUE SPECIFICITY</scope>
    <scope>DISRUPTION PHENOTYPE</scope>
</reference>
<accession>O65570</accession>
<accession>F4JPJ2</accession>
<accession>Q541Y5</accession>
<accession>Q9SZW9</accession>
<organism>
    <name type="scientific">Arabidopsis thaliana</name>
    <name type="common">Mouse-ear cress</name>
    <dbReference type="NCBI Taxonomy" id="3702"/>
    <lineage>
        <taxon>Eukaryota</taxon>
        <taxon>Viridiplantae</taxon>
        <taxon>Streptophyta</taxon>
        <taxon>Embryophyta</taxon>
        <taxon>Tracheophyta</taxon>
        <taxon>Spermatophyta</taxon>
        <taxon>Magnoliopsida</taxon>
        <taxon>eudicotyledons</taxon>
        <taxon>Gunneridae</taxon>
        <taxon>Pentapetalae</taxon>
        <taxon>rosids</taxon>
        <taxon>malvids</taxon>
        <taxon>Brassicales</taxon>
        <taxon>Brassicaceae</taxon>
        <taxon>Camelineae</taxon>
        <taxon>Arabidopsis</taxon>
    </lineage>
</organism>